<comment type="PTM">
    <text evidence="1">The N-terminus is cleaved by ribosomal processing cysteine protease Prp.</text>
</comment>
<comment type="similarity">
    <text evidence="2">Belongs to the bacterial ribosomal protein bL27 family.</text>
</comment>
<keyword id="KW-0687">Ribonucleoprotein</keyword>
<keyword id="KW-0689">Ribosomal protein</keyword>
<reference key="1">
    <citation type="journal article" date="2005" name="J. Bacteriol.">
        <title>Insights on evolution of virulence and resistance from the complete genome analysis of an early methicillin-resistant Staphylococcus aureus strain and a biofilm-producing methicillin-resistant Staphylococcus epidermidis strain.</title>
        <authorList>
            <person name="Gill S.R."/>
            <person name="Fouts D.E."/>
            <person name="Archer G.L."/>
            <person name="Mongodin E.F."/>
            <person name="DeBoy R.T."/>
            <person name="Ravel J."/>
            <person name="Paulsen I.T."/>
            <person name="Kolonay J.F."/>
            <person name="Brinkac L.M."/>
            <person name="Beanan M.J."/>
            <person name="Dodson R.J."/>
            <person name="Daugherty S.C."/>
            <person name="Madupu R."/>
            <person name="Angiuoli S.V."/>
            <person name="Durkin A.S."/>
            <person name="Haft D.H."/>
            <person name="Vamathevan J.J."/>
            <person name="Khouri H."/>
            <person name="Utterback T.R."/>
            <person name="Lee C."/>
            <person name="Dimitrov G."/>
            <person name="Jiang L."/>
            <person name="Qin H."/>
            <person name="Weidman J."/>
            <person name="Tran K."/>
            <person name="Kang K.H."/>
            <person name="Hance I.R."/>
            <person name="Nelson K.E."/>
            <person name="Fraser C.M."/>
        </authorList>
    </citation>
    <scope>NUCLEOTIDE SEQUENCE [LARGE SCALE GENOMIC DNA]</scope>
    <source>
        <strain>COL</strain>
    </source>
</reference>
<proteinExistence type="inferred from homology"/>
<accession>Q5HFB8</accession>
<feature type="propeptide" id="PRO_0000459928" evidence="1">
    <location>
        <begin position="1"/>
        <end position="9"/>
    </location>
</feature>
<feature type="chain" id="PRO_0000181164" description="Large ribosomal subunit protein bL27">
    <location>
        <begin position="10"/>
        <end position="94"/>
    </location>
</feature>
<name>RL27_STAAC</name>
<sequence>MLKLNLQFFASKKGVSSTKNGRDSESKRLGAKRADGQFVTGGSILYRQRGTKIYPGENVGRGGDDTLFAKIDGVVKFERKGRDKKQVSVYAVAE</sequence>
<organism>
    <name type="scientific">Staphylococcus aureus (strain COL)</name>
    <dbReference type="NCBI Taxonomy" id="93062"/>
    <lineage>
        <taxon>Bacteria</taxon>
        <taxon>Bacillati</taxon>
        <taxon>Bacillota</taxon>
        <taxon>Bacilli</taxon>
        <taxon>Bacillales</taxon>
        <taxon>Staphylococcaceae</taxon>
        <taxon>Staphylococcus</taxon>
    </lineage>
</organism>
<dbReference type="EMBL" id="CP000046">
    <property type="protein sequence ID" value="AAW36806.1"/>
    <property type="molecule type" value="Genomic_DNA"/>
</dbReference>
<dbReference type="RefSeq" id="WP_000916187.1">
    <property type="nucleotide sequence ID" value="NZ_JBGOFO010000003.1"/>
</dbReference>
<dbReference type="SMR" id="Q5HFB8"/>
<dbReference type="GeneID" id="98346013"/>
<dbReference type="KEGG" id="sac:SACOL1700"/>
<dbReference type="HOGENOM" id="CLU_095424_4_0_9"/>
<dbReference type="Proteomes" id="UP000000530">
    <property type="component" value="Chromosome"/>
</dbReference>
<dbReference type="GO" id="GO:0022625">
    <property type="term" value="C:cytosolic large ribosomal subunit"/>
    <property type="evidence" value="ECO:0007669"/>
    <property type="project" value="TreeGrafter"/>
</dbReference>
<dbReference type="GO" id="GO:0003735">
    <property type="term" value="F:structural constituent of ribosome"/>
    <property type="evidence" value="ECO:0007669"/>
    <property type="project" value="InterPro"/>
</dbReference>
<dbReference type="GO" id="GO:0006412">
    <property type="term" value="P:translation"/>
    <property type="evidence" value="ECO:0007669"/>
    <property type="project" value="UniProtKB-UniRule"/>
</dbReference>
<dbReference type="FunFam" id="2.40.50.100:FF:000004">
    <property type="entry name" value="50S ribosomal protein L27"/>
    <property type="match status" value="1"/>
</dbReference>
<dbReference type="Gene3D" id="2.40.50.100">
    <property type="match status" value="1"/>
</dbReference>
<dbReference type="HAMAP" id="MF_00539">
    <property type="entry name" value="Ribosomal_bL27"/>
    <property type="match status" value="1"/>
</dbReference>
<dbReference type="InterPro" id="IPR001684">
    <property type="entry name" value="Ribosomal_bL27"/>
</dbReference>
<dbReference type="InterPro" id="IPR018261">
    <property type="entry name" value="Ribosomal_bL27_CS"/>
</dbReference>
<dbReference type="NCBIfam" id="TIGR00062">
    <property type="entry name" value="L27"/>
    <property type="match status" value="1"/>
</dbReference>
<dbReference type="PANTHER" id="PTHR15893:SF0">
    <property type="entry name" value="LARGE RIBOSOMAL SUBUNIT PROTEIN BL27M"/>
    <property type="match status" value="1"/>
</dbReference>
<dbReference type="PANTHER" id="PTHR15893">
    <property type="entry name" value="RIBOSOMAL PROTEIN L27"/>
    <property type="match status" value="1"/>
</dbReference>
<dbReference type="Pfam" id="PF01016">
    <property type="entry name" value="Ribosomal_L27"/>
    <property type="match status" value="1"/>
</dbReference>
<dbReference type="PRINTS" id="PR00063">
    <property type="entry name" value="RIBOSOMALL27"/>
</dbReference>
<dbReference type="SUPFAM" id="SSF110324">
    <property type="entry name" value="Ribosomal L27 protein-like"/>
    <property type="match status" value="1"/>
</dbReference>
<dbReference type="PROSITE" id="PS00831">
    <property type="entry name" value="RIBOSOMAL_L27"/>
    <property type="match status" value="1"/>
</dbReference>
<gene>
    <name evidence="2" type="primary">rpmA</name>
    <name type="ordered locus">SACOL1700</name>
</gene>
<protein>
    <recommendedName>
        <fullName evidence="2">Large ribosomal subunit protein bL27</fullName>
    </recommendedName>
    <alternativeName>
        <fullName evidence="3">50S ribosomal protein L27</fullName>
    </alternativeName>
</protein>
<evidence type="ECO:0000250" key="1">
    <source>
        <dbReference type="UniProtKB" id="Q2FXT0"/>
    </source>
</evidence>
<evidence type="ECO:0000255" key="2">
    <source>
        <dbReference type="HAMAP-Rule" id="MF_00539"/>
    </source>
</evidence>
<evidence type="ECO:0000305" key="3"/>